<protein>
    <recommendedName>
        <fullName>Histone H3 type 1</fullName>
    </recommendedName>
</protein>
<keyword id="KW-0007">Acetylation</keyword>
<keyword id="KW-0158">Chromosome</keyword>
<keyword id="KW-0903">Direct protein sequencing</keyword>
<keyword id="KW-0238">DNA-binding</keyword>
<keyword id="KW-0488">Methylation</keyword>
<keyword id="KW-0544">Nucleosome core</keyword>
<keyword id="KW-0539">Nucleus</keyword>
<keyword id="KW-0597">Phosphoprotein</keyword>
<accession>Q42681</accession>
<gene>
    <name type="primary">ch3-I</name>
</gene>
<proteinExistence type="evidence at protein level"/>
<organism>
    <name type="scientific">Chlamydomonas reinhardtii</name>
    <name type="common">Chlamydomonas smithii</name>
    <dbReference type="NCBI Taxonomy" id="3055"/>
    <lineage>
        <taxon>Eukaryota</taxon>
        <taxon>Viridiplantae</taxon>
        <taxon>Chlorophyta</taxon>
        <taxon>core chlorophytes</taxon>
        <taxon>Chlorophyceae</taxon>
        <taxon>CS clade</taxon>
        <taxon>Chlamydomonadales</taxon>
        <taxon>Chlamydomonadaceae</taxon>
        <taxon>Chlamydomonas</taxon>
    </lineage>
</organism>
<reference key="1">
    <citation type="journal article" date="1995" name="Curr. Genet.">
        <title>The organization structure and regulatory elements of Chlamydomonas histone genes reveal features linking plant and animal genes.</title>
        <authorList>
            <person name="Fabry S."/>
            <person name="Mueller K."/>
            <person name="Lindauer A."/>
            <person name="Park P.B."/>
            <person name="Cornelius T."/>
            <person name="Schmitt R."/>
        </authorList>
    </citation>
    <scope>NUCLEOTIDE SEQUENCE [GENOMIC DNA]</scope>
</reference>
<reference key="2">
    <citation type="journal article" date="2005" name="Plant Cell">
        <title>Monomethyl histone H3 lysine 4 as an epigenetic mark for silenced euchromatin in Chlamydomonas.</title>
        <authorList>
            <person name="van Dijk K."/>
            <person name="Marley K.E."/>
            <person name="Jeong B.-R."/>
            <person name="Xu J."/>
            <person name="Hesson J."/>
            <person name="Cerny R.L."/>
            <person name="Waterborg J.H."/>
            <person name="Cerutti H."/>
        </authorList>
    </citation>
    <scope>PROTEIN SEQUENCE OF 2-16</scope>
    <scope>METHYLATION AT LYS-5</scope>
</reference>
<reference key="3">
    <citation type="journal article" date="1995" name="Plant Physiol.">
        <title>Histones of Chlamydomonas reinhardtii. Synthesis, acetylation, and methylation.</title>
        <authorList>
            <person name="Waterborg J.H."/>
            <person name="Robertson A.J."/>
            <person name="Tatar D.L."/>
            <person name="Borza C.M."/>
            <person name="Davie J.R."/>
        </authorList>
    </citation>
    <scope>PROTEIN SEQUENCE OF 2-49</scope>
    <scope>ACETYLATION AT LYS-10; LYS-15; LYS-19; LYS-24 AND LYS-28</scope>
    <scope>METHYLATION AT LYS-5; LYS-10; LYS-28; LYS-36 AND LYS-37</scope>
    <scope>LACK OF PHOSPHORYLATION</scope>
</reference>
<reference key="4">
    <citation type="journal article" date="1998" name="J. Biol. Chem.">
        <title>Dynamics of histone acetylation in Chlamydomonas reinhardtii.</title>
        <authorList>
            <person name="Waterborg J.H."/>
        </authorList>
    </citation>
    <scope>ACETYLATION</scope>
</reference>
<reference key="5">
    <citation type="journal article" date="2007" name="Nucleic Acids Res.">
        <title>SET3p monomethylates histone H3 on lysine 9 and is required for the silencing of tandemly repeated transgenes in Chlamydomonas.</title>
        <authorList>
            <person name="Casas-Mollano J.A."/>
            <person name="van Dijk K."/>
            <person name="Eisenhart J."/>
            <person name="Cerutti H."/>
        </authorList>
    </citation>
    <scope>METHYLATION AT LYS-10</scope>
</reference>
<name>H31_CHLRE</name>
<comment type="function">
    <text>Core component of nucleosome. Nucleosomes wrap and compact DNA into chromatin, limiting DNA accessibility to the cellular machineries which require DNA as a template. Histones thereby play a central role in transcription regulation, DNA repair, DNA replication and chromosomal stability. DNA accessibility is regulated via a complex set of post-translational modifications of histones, also called histone code, and nucleosome remodeling.</text>
</comment>
<comment type="subunit">
    <text>The nucleosome is a histone octamer containing two molecules each of H2A, H2B, H3 and H4 assembled in one H3-H4 heterotetramer and two H2A-H2B heterodimers. The octamer wraps approximately 147 bp of DNA.</text>
</comment>
<comment type="subcellular location">
    <subcellularLocation>
        <location evidence="1">Nucleus</location>
    </subcellularLocation>
    <subcellularLocation>
        <location evidence="1">Chromosome</location>
    </subcellularLocation>
</comment>
<comment type="PTM">
    <text evidence="5 6">Acetylation is generally linked to gene activation. Acetylated to form H3K9ac (11%), H3K14ac (17%), H3K18ac (11%), H3K23ac (16%) and H3K27ac (7%). H3K4, H3K35 and H3K36 are not acetylated. H3K4me prevents acetylation. 32% of the histone H3 are acetylated with, on average, 2.4 acetyl-Lys. They are all continuously deacatylated and re-acetylated with a half-life of approximately 2 minutes.</text>
</comment>
<comment type="PTM">
    <text evidence="3 4 5">Monomethylated to form H3K4me1 (81%), H3K9me1 (16%), H3K27me1 (25%), H3K35me1 (25%) and H3K36me1 (5%). No methylation at H3K14, H3K18 and H3K23. Methylated by a protein complex that includes Mut11. Set1 methylates specifically H3K4. H3K4me1 is associated with silenced euchromatin. Set3 forms H3K9me1, while H3K9me2 is undetected. H3K9me1 is specifically associated with silent, multi-copy transgenes.</text>
</comment>
<comment type="PTM">
    <text>No phosphorylation detected.</text>
</comment>
<comment type="similarity">
    <text evidence="7">Belongs to the histone H3 family.</text>
</comment>
<comment type="caution">
    <text evidence="7">To ensure consistency between histone entries, we follow the 'Brno' nomenclature for histone modifications, with positions referring to those used in the literature for the 'closest' model organism. Due to slight variations in histone sequences between organisms and to the presence of initiator methionine in UniProtKB/Swiss-Prot sequences, the actual positions of modified amino acids in the sequence generally differ. In this entry the following conventions are used: H3K4 = Lys-5; H3K4me = methylated Lys-5; H3K9ac = acetylated Lys-10; H3K9me = methylated Lys-10; H3S10ph = phosphorylated Ser-11; H3T11ph = phosphorylated Thr-12; H3K14 = Lys-15; H3K14ac = acetylated Lys-15; H3K18 = Lys-19; H3K18ac = acetylated Lys-19; H3K23 = Lys-24; H3K23ac = acetylated Lys-24; H3K27ac = acetylated Lys-28; H3K27me = methylated Lys-28; H3K35 = Lys-36; H3K35me = methylated Lys-36; H3K36 = Lys-37; H3K36me = methylated Lys-37.</text>
</comment>
<sequence>MARTKQTARKSTGGKAPRKQLATKAARKTPATGGVKKPHRYRPGTVALREIRKYQKSTELVIRKLPFQRLVREIAQDFKTDLRFQSQAVLALQEAAEAYLVGLFEDTNLCAIHAKRVTIMPKDIQLARRIRGERA</sequence>
<dbReference type="EMBL" id="U16825">
    <property type="protein sequence ID" value="AAA98455.1"/>
    <property type="molecule type" value="Genomic_DNA"/>
</dbReference>
<dbReference type="PIR" id="S59592">
    <property type="entry name" value="S59592"/>
</dbReference>
<dbReference type="SMR" id="Q42681"/>
<dbReference type="iPTMnet" id="Q42681"/>
<dbReference type="eggNOG" id="KOG1745">
    <property type="taxonomic scope" value="Eukaryota"/>
</dbReference>
<dbReference type="GO" id="GO:0000786">
    <property type="term" value="C:nucleosome"/>
    <property type="evidence" value="ECO:0007669"/>
    <property type="project" value="UniProtKB-KW"/>
</dbReference>
<dbReference type="GO" id="GO:0005634">
    <property type="term" value="C:nucleus"/>
    <property type="evidence" value="ECO:0007669"/>
    <property type="project" value="UniProtKB-SubCell"/>
</dbReference>
<dbReference type="GO" id="GO:0003677">
    <property type="term" value="F:DNA binding"/>
    <property type="evidence" value="ECO:0007669"/>
    <property type="project" value="UniProtKB-KW"/>
</dbReference>
<dbReference type="GO" id="GO:0046982">
    <property type="term" value="F:protein heterodimerization activity"/>
    <property type="evidence" value="ECO:0007669"/>
    <property type="project" value="InterPro"/>
</dbReference>
<dbReference type="GO" id="GO:0030527">
    <property type="term" value="F:structural constituent of chromatin"/>
    <property type="evidence" value="ECO:0007669"/>
    <property type="project" value="InterPro"/>
</dbReference>
<dbReference type="CDD" id="cd22911">
    <property type="entry name" value="HFD_H3"/>
    <property type="match status" value="1"/>
</dbReference>
<dbReference type="FunFam" id="1.10.20.10:FF:000078">
    <property type="entry name" value="Histone H3"/>
    <property type="match status" value="1"/>
</dbReference>
<dbReference type="FunFam" id="1.10.20.10:FF:000044">
    <property type="entry name" value="Histone H3.3"/>
    <property type="match status" value="1"/>
</dbReference>
<dbReference type="Gene3D" id="1.10.20.10">
    <property type="entry name" value="Histone, subunit A"/>
    <property type="match status" value="1"/>
</dbReference>
<dbReference type="InterPro" id="IPR009072">
    <property type="entry name" value="Histone-fold"/>
</dbReference>
<dbReference type="InterPro" id="IPR007125">
    <property type="entry name" value="Histone_H2A/H2B/H3"/>
</dbReference>
<dbReference type="InterPro" id="IPR000164">
    <property type="entry name" value="Histone_H3/CENP-A"/>
</dbReference>
<dbReference type="PANTHER" id="PTHR11426">
    <property type="entry name" value="HISTONE H3"/>
    <property type="match status" value="1"/>
</dbReference>
<dbReference type="Pfam" id="PF00125">
    <property type="entry name" value="Histone"/>
    <property type="match status" value="1"/>
</dbReference>
<dbReference type="PRINTS" id="PR00622">
    <property type="entry name" value="HISTONEH3"/>
</dbReference>
<dbReference type="SMART" id="SM00428">
    <property type="entry name" value="H3"/>
    <property type="match status" value="1"/>
</dbReference>
<dbReference type="SUPFAM" id="SSF47113">
    <property type="entry name" value="Histone-fold"/>
    <property type="match status" value="1"/>
</dbReference>
<dbReference type="PROSITE" id="PS00322">
    <property type="entry name" value="HISTONE_H3_1"/>
    <property type="match status" value="1"/>
</dbReference>
<dbReference type="PROSITE" id="PS00959">
    <property type="entry name" value="HISTONE_H3_2"/>
    <property type="match status" value="1"/>
</dbReference>
<evidence type="ECO:0000250" key="1"/>
<evidence type="ECO:0000256" key="2">
    <source>
        <dbReference type="SAM" id="MobiDB-lite"/>
    </source>
</evidence>
<evidence type="ECO:0000269" key="3">
    <source>
    </source>
</evidence>
<evidence type="ECO:0000269" key="4">
    <source>
    </source>
</evidence>
<evidence type="ECO:0000269" key="5">
    <source>
    </source>
</evidence>
<evidence type="ECO:0000269" key="6">
    <source>
    </source>
</evidence>
<evidence type="ECO:0000305" key="7"/>
<feature type="initiator methionine" description="Removed" evidence="3 5">
    <location>
        <position position="1"/>
    </location>
</feature>
<feature type="chain" id="PRO_0000278188" description="Histone H3 type 1">
    <location>
        <begin position="2"/>
        <end position="135"/>
    </location>
</feature>
<feature type="region of interest" description="Disordered" evidence="2">
    <location>
        <begin position="1"/>
        <end position="40"/>
    </location>
</feature>
<feature type="site" description="Not N6-acetylated" evidence="5">
    <location>
        <position position="5"/>
    </location>
</feature>
<feature type="site" description="Not N6-methylated" evidence="5">
    <location>
        <position position="15"/>
    </location>
</feature>
<feature type="site" description="Not N6-methylated" evidence="5">
    <location>
        <position position="19"/>
    </location>
</feature>
<feature type="site" description="Not N6-methylated" evidence="5">
    <location>
        <position position="24"/>
    </location>
</feature>
<feature type="site" description="Not N6-acetylated" evidence="5">
    <location>
        <position position="36"/>
    </location>
</feature>
<feature type="site" description="Not N6-acetylated" evidence="5">
    <location>
        <position position="37"/>
    </location>
</feature>
<feature type="modified residue" description="N6-methyllysine" evidence="3 5">
    <location>
        <position position="5"/>
    </location>
</feature>
<feature type="modified residue" description="N6-acetyllysine; alternate" evidence="5">
    <location>
        <position position="10"/>
    </location>
</feature>
<feature type="modified residue" description="N6-methyllysine; alternate" evidence="4 5">
    <location>
        <position position="10"/>
    </location>
</feature>
<feature type="modified residue" description="Phosphoserine" evidence="1">
    <location>
        <position position="11"/>
    </location>
</feature>
<feature type="modified residue" description="Phosphothreonine" evidence="1">
    <location>
        <position position="12"/>
    </location>
</feature>
<feature type="modified residue" description="N6-acetyllysine" evidence="5">
    <location>
        <position position="15"/>
    </location>
</feature>
<feature type="modified residue" description="N6-acetyllysine" evidence="5">
    <location>
        <position position="19"/>
    </location>
</feature>
<feature type="modified residue" description="N6-acetyllysine" evidence="5">
    <location>
        <position position="24"/>
    </location>
</feature>
<feature type="modified residue" description="N6-acetyllysine; alternate" evidence="5">
    <location>
        <position position="28"/>
    </location>
</feature>
<feature type="modified residue" description="N6-methyllysine; alternate" evidence="5">
    <location>
        <position position="28"/>
    </location>
</feature>
<feature type="modified residue" description="N6-methyllysine" evidence="5">
    <location>
        <position position="36"/>
    </location>
</feature>
<feature type="modified residue" description="N6-methyllysine" evidence="5">
    <location>
        <position position="37"/>
    </location>
</feature>